<sequence length="393" mass="41442">MNHSPQSARPVSIMRRFLDSEAAGGITLMAAAALALIVANSPFAQTYFDALHLYIGPLSLAHWINDALMAIFFLLVGLEIKREMLDGQLASWPNRMLPGIAAAGGVILPAIIFAVLNHDNPAKLRGWAVPSATDIAFALGVLSLLGSRAPSSLKVFLATLAILDDLAAVVIIAIFYTAEISMPYLGAAFITAAVLFVMNRMGVVKLLPYLISAVILWFFVFNSGVHATVAGVVAALMIPLKPAPGRPDDMTSPLHKLEHALAKPVAFIVVPIFGFANAGISFKGLEASVLGDTLTLGILLGLFLGKQFGVFGAAWLAIKTGLAEKPMGASWVQLYGVAILCGIGFTMSIFIGLLSFPSDLMQTETKIGVLSGSALSAICGYLLLRAAARPKRG</sequence>
<evidence type="ECO:0000255" key="1">
    <source>
        <dbReference type="HAMAP-Rule" id="MF_01844"/>
    </source>
</evidence>
<evidence type="ECO:0000305" key="2"/>
<comment type="function">
    <text evidence="1">Na(+)/H(+) antiporter that extrudes sodium in exchange for external protons.</text>
</comment>
<comment type="catalytic activity">
    <reaction evidence="1">
        <text>Na(+)(in) + 2 H(+)(out) = Na(+)(out) + 2 H(+)(in)</text>
        <dbReference type="Rhea" id="RHEA:29251"/>
        <dbReference type="ChEBI" id="CHEBI:15378"/>
        <dbReference type="ChEBI" id="CHEBI:29101"/>
    </reaction>
    <physiologicalReaction direction="left-to-right" evidence="1">
        <dbReference type="Rhea" id="RHEA:29252"/>
    </physiologicalReaction>
</comment>
<comment type="subcellular location">
    <subcellularLocation>
        <location evidence="1">Cell inner membrane</location>
        <topology evidence="1">Multi-pass membrane protein</topology>
    </subcellularLocation>
</comment>
<comment type="similarity">
    <text evidence="1">Belongs to the NhaA Na(+)/H(+) (TC 2.A.33) antiporter family.</text>
</comment>
<comment type="sequence caution" evidence="2">
    <conflict type="erroneous initiation">
        <sequence resource="EMBL-CDS" id="ABQ61448"/>
    </conflict>
</comment>
<proteinExistence type="inferred from homology"/>
<protein>
    <recommendedName>
        <fullName evidence="1">Na(+)/H(+) antiporter NhaA</fullName>
    </recommendedName>
    <alternativeName>
        <fullName evidence="1">Sodium/proton antiporter NhaA</fullName>
    </alternativeName>
</protein>
<gene>
    <name evidence="1" type="primary">nhaA</name>
    <name type="ordered locus">BOV_0406</name>
</gene>
<reference key="1">
    <citation type="journal article" date="2009" name="PLoS ONE">
        <title>Genome degradation in Brucella ovis corresponds with narrowing of its host range and tissue tropism.</title>
        <authorList>
            <person name="Tsolis R.M."/>
            <person name="Seshadri R."/>
            <person name="Santos R.L."/>
            <person name="Sangari F.J."/>
            <person name="Lobo J.M."/>
            <person name="de Jong M.F."/>
            <person name="Ren Q."/>
            <person name="Myers G."/>
            <person name="Brinkac L.M."/>
            <person name="Nelson W.C."/>
            <person name="Deboy R.T."/>
            <person name="Angiuoli S."/>
            <person name="Khouri H."/>
            <person name="Dimitrov G."/>
            <person name="Robinson J.R."/>
            <person name="Mulligan S."/>
            <person name="Walker R.L."/>
            <person name="Elzer P.E."/>
            <person name="Hassan K.A."/>
            <person name="Paulsen I.T."/>
        </authorList>
    </citation>
    <scope>NUCLEOTIDE SEQUENCE [LARGE SCALE GENOMIC DNA]</scope>
    <source>
        <strain>ATCC 25840 / 63/290 / NCTC 10512</strain>
    </source>
</reference>
<dbReference type="EMBL" id="CP000708">
    <property type="protein sequence ID" value="ABQ61448.1"/>
    <property type="status" value="ALT_INIT"/>
    <property type="molecule type" value="Genomic_DNA"/>
</dbReference>
<dbReference type="RefSeq" id="WP_004689493.1">
    <property type="nucleotide sequence ID" value="NC_009505.1"/>
</dbReference>
<dbReference type="SMR" id="A5VNX4"/>
<dbReference type="GeneID" id="97534226"/>
<dbReference type="KEGG" id="bov:BOV_0406"/>
<dbReference type="HOGENOM" id="CLU_015803_1_2_5"/>
<dbReference type="PhylomeDB" id="A5VNX4"/>
<dbReference type="Proteomes" id="UP000006383">
    <property type="component" value="Chromosome I"/>
</dbReference>
<dbReference type="GO" id="GO:0005886">
    <property type="term" value="C:plasma membrane"/>
    <property type="evidence" value="ECO:0007669"/>
    <property type="project" value="UniProtKB-SubCell"/>
</dbReference>
<dbReference type="GO" id="GO:0015385">
    <property type="term" value="F:sodium:proton antiporter activity"/>
    <property type="evidence" value="ECO:0007669"/>
    <property type="project" value="TreeGrafter"/>
</dbReference>
<dbReference type="GO" id="GO:0006885">
    <property type="term" value="P:regulation of pH"/>
    <property type="evidence" value="ECO:0007669"/>
    <property type="project" value="InterPro"/>
</dbReference>
<dbReference type="Gene3D" id="1.20.1530.10">
    <property type="entry name" value="Na+/H+ antiporter like domain"/>
    <property type="match status" value="1"/>
</dbReference>
<dbReference type="HAMAP" id="MF_01844">
    <property type="entry name" value="NhaA"/>
    <property type="match status" value="1"/>
</dbReference>
<dbReference type="InterPro" id="IPR023171">
    <property type="entry name" value="Na/H_antiporter_dom_sf"/>
</dbReference>
<dbReference type="InterPro" id="IPR004670">
    <property type="entry name" value="NhaA"/>
</dbReference>
<dbReference type="NCBIfam" id="TIGR00773">
    <property type="entry name" value="NhaA"/>
    <property type="match status" value="1"/>
</dbReference>
<dbReference type="NCBIfam" id="NF007111">
    <property type="entry name" value="PRK09560.1"/>
    <property type="match status" value="1"/>
</dbReference>
<dbReference type="NCBIfam" id="NF007112">
    <property type="entry name" value="PRK09561.1"/>
    <property type="match status" value="1"/>
</dbReference>
<dbReference type="PANTHER" id="PTHR30341:SF0">
    <property type="entry name" value="NA(+)_H(+) ANTIPORTER NHAA"/>
    <property type="match status" value="1"/>
</dbReference>
<dbReference type="PANTHER" id="PTHR30341">
    <property type="entry name" value="SODIUM ION/PROTON ANTIPORTER NHAA-RELATED"/>
    <property type="match status" value="1"/>
</dbReference>
<dbReference type="Pfam" id="PF06965">
    <property type="entry name" value="Na_H_antiport_1"/>
    <property type="match status" value="1"/>
</dbReference>
<keyword id="KW-0050">Antiport</keyword>
<keyword id="KW-0997">Cell inner membrane</keyword>
<keyword id="KW-1003">Cell membrane</keyword>
<keyword id="KW-0406">Ion transport</keyword>
<keyword id="KW-0472">Membrane</keyword>
<keyword id="KW-0915">Sodium</keyword>
<keyword id="KW-0739">Sodium transport</keyword>
<keyword id="KW-0812">Transmembrane</keyword>
<keyword id="KW-1133">Transmembrane helix</keyword>
<keyword id="KW-0813">Transport</keyword>
<accession>A5VNX4</accession>
<organism>
    <name type="scientific">Brucella ovis (strain ATCC 25840 / 63/290 / NCTC 10512)</name>
    <dbReference type="NCBI Taxonomy" id="444178"/>
    <lineage>
        <taxon>Bacteria</taxon>
        <taxon>Pseudomonadati</taxon>
        <taxon>Pseudomonadota</taxon>
        <taxon>Alphaproteobacteria</taxon>
        <taxon>Hyphomicrobiales</taxon>
        <taxon>Brucellaceae</taxon>
        <taxon>Brucella/Ochrobactrum group</taxon>
        <taxon>Brucella</taxon>
    </lineage>
</organism>
<feature type="chain" id="PRO_0000334246" description="Na(+)/H(+) antiporter NhaA">
    <location>
        <begin position="1"/>
        <end position="393"/>
    </location>
</feature>
<feature type="transmembrane region" description="Helical" evidence="1">
    <location>
        <begin position="23"/>
        <end position="43"/>
    </location>
</feature>
<feature type="transmembrane region" description="Helical" evidence="1">
    <location>
        <begin position="58"/>
        <end position="78"/>
    </location>
</feature>
<feature type="transmembrane region" description="Helical" evidence="1">
    <location>
        <begin position="96"/>
        <end position="116"/>
    </location>
</feature>
<feature type="transmembrane region" description="Helical" evidence="1">
    <location>
        <begin position="126"/>
        <end position="146"/>
    </location>
</feature>
<feature type="transmembrane region" description="Helical" evidence="1">
    <location>
        <begin position="155"/>
        <end position="175"/>
    </location>
</feature>
<feature type="transmembrane region" description="Helical" evidence="1">
    <location>
        <begin position="178"/>
        <end position="198"/>
    </location>
</feature>
<feature type="transmembrane region" description="Helical" evidence="1">
    <location>
        <begin position="201"/>
        <end position="221"/>
    </location>
</feature>
<feature type="transmembrane region" description="Helical" evidence="1">
    <location>
        <begin position="224"/>
        <end position="244"/>
    </location>
</feature>
<feature type="transmembrane region" description="Helical" evidence="1">
    <location>
        <begin position="265"/>
        <end position="285"/>
    </location>
</feature>
<feature type="transmembrane region" description="Helical" evidence="1">
    <location>
        <begin position="298"/>
        <end position="318"/>
    </location>
</feature>
<feature type="transmembrane region" description="Helical" evidence="1">
    <location>
        <begin position="334"/>
        <end position="354"/>
    </location>
</feature>
<feature type="transmembrane region" description="Helical" evidence="1">
    <location>
        <begin position="367"/>
        <end position="387"/>
    </location>
</feature>
<name>NHAA_BRUO2</name>